<sequence>MAPTFTNSNGQPIPEPFATQRVGQHGPLLLQDFNLIDSLAHFDRERIPERVVHAKGSGAYGVFEVTDDITDVCAAKFLDTVGKKTRIFTRFSTVGGELGSADTARDPRGFATKFYTEEGNLDLVYNNTPVFFIRDPSKFPHFIHTQKRNPETHLKDANMFWDYLTTNEESVHQVMVLFSDRGTPASYREMNGYSGHTYKWSNNKGEWFYVQVHFISDQGIKTLTNEEAGSLAGSNPDYAQEDLFKNIAAGNYPSWTCYIQTMTEAQAKEAEFSVFDLTKVWPHGKYPMRRFGKFTLNENPKNYFAEVEQAAFSPAHTVPHMEPSADPVLQSRLFSYADTHRHRLGTNYTQIPVNCPVTGAVFNPHMRDGAMNVNGNLGNHPNYLASDKPIEFKQFSLQEDQEVWHGAATPFHWKATPADFKQATELWKVLKKYPNQQEHLAHNVAVHASAADAPIQDRVIAYFTKVHPDLGDLIKKEILELSPRK</sequence>
<name>CATA_CANTR</name>
<feature type="initiator methionine" description="Removed" evidence="4">
    <location>
        <position position="1"/>
    </location>
</feature>
<feature type="chain" id="PRO_0000084920" description="Peroxisomal catalase">
    <location>
        <begin position="2"/>
        <end position="485"/>
    </location>
</feature>
<feature type="active site" evidence="3">
    <location>
        <position position="53"/>
    </location>
</feature>
<feature type="active site" evidence="3">
    <location>
        <position position="126"/>
    </location>
</feature>
<feature type="binding site" description="axial binding residue" evidence="1">
    <location>
        <position position="336"/>
    </location>
    <ligand>
        <name>heme</name>
        <dbReference type="ChEBI" id="CHEBI:30413"/>
    </ligand>
    <ligandPart>
        <name>Fe</name>
        <dbReference type="ChEBI" id="CHEBI:18248"/>
    </ligandPart>
</feature>
<feature type="sequence conflict" description="In Ref. 2; AAA34327." evidence="5" ref="2">
    <original>T</original>
    <variation>S</variation>
    <location>
        <position position="166"/>
    </location>
</feature>
<feature type="sequence conflict" description="In Ref. 4; CAA29093." evidence="5" ref="4">
    <original>L</original>
    <variation>V</variation>
    <location>
        <position position="377"/>
    </location>
</feature>
<feature type="sequence conflict" description="In Ref. 2; AAA34327." evidence="5" ref="2">
    <original>I</original>
    <variation>V</variation>
    <location>
        <position position="390"/>
    </location>
</feature>
<organism>
    <name type="scientific">Candida tropicalis</name>
    <name type="common">Yeast</name>
    <dbReference type="NCBI Taxonomy" id="5482"/>
    <lineage>
        <taxon>Eukaryota</taxon>
        <taxon>Fungi</taxon>
        <taxon>Dikarya</taxon>
        <taxon>Ascomycota</taxon>
        <taxon>Saccharomycotina</taxon>
        <taxon>Pichiomycetes</taxon>
        <taxon>Debaryomycetaceae</taxon>
        <taxon>Candida/Lodderomyces clade</taxon>
        <taxon>Candida</taxon>
    </lineage>
</organism>
<proteinExistence type="evidence at protein level"/>
<comment type="function">
    <text evidence="1">Catalyzes the degradation of hydrogen peroxide (H(2)O(2)) generated by peroxisomal oxidases to water and oxygen, thereby protecting cells from the toxic effects of hydrogen peroxide.</text>
</comment>
<comment type="catalytic activity">
    <reaction evidence="3">
        <text>2 H2O2 = O2 + 2 H2O</text>
        <dbReference type="Rhea" id="RHEA:20309"/>
        <dbReference type="ChEBI" id="CHEBI:15377"/>
        <dbReference type="ChEBI" id="CHEBI:15379"/>
        <dbReference type="ChEBI" id="CHEBI:16240"/>
        <dbReference type="EC" id="1.11.1.6"/>
    </reaction>
</comment>
<comment type="cofactor">
    <cofactor evidence="2">
        <name>heme</name>
        <dbReference type="ChEBI" id="CHEBI:30413"/>
    </cofactor>
</comment>
<comment type="subunit">
    <text>Homotetramer.</text>
</comment>
<comment type="subcellular location">
    <subcellularLocation>
        <location evidence="2">Peroxisome matrix</location>
    </subcellularLocation>
</comment>
<comment type="similarity">
    <text evidence="5">Belongs to the catalase family.</text>
</comment>
<evidence type="ECO:0000250" key="1">
    <source>
        <dbReference type="UniProtKB" id="P04040"/>
    </source>
</evidence>
<evidence type="ECO:0000250" key="2">
    <source>
        <dbReference type="UniProtKB" id="P15202"/>
    </source>
</evidence>
<evidence type="ECO:0000255" key="3">
    <source>
        <dbReference type="PROSITE-ProRule" id="PRU10013"/>
    </source>
</evidence>
<evidence type="ECO:0000269" key="4">
    <source>
    </source>
</evidence>
<evidence type="ECO:0000305" key="5"/>
<accession>P07820</accession>
<gene>
    <name type="primary">POX9</name>
</gene>
<reference key="1">
    <citation type="journal article" date="1987" name="Eur. J. Biochem.">
        <title>Catalase gene of the yeast Candida tropicalis. Sequence analysis and comparison with peroxisomal and cytosolic catalases from other sources.</title>
        <authorList>
            <person name="Okada H."/>
            <person name="Ueda M."/>
            <person name="Sugaya T."/>
            <person name="Atomi H."/>
            <person name="Mozaffar S."/>
            <person name="Hishida T."/>
            <person name="Teranishi Y."/>
            <person name="Okazaki K."/>
            <person name="Takechi T."/>
            <person name="Kamiryo T."/>
            <person name="Tanaka A."/>
        </authorList>
    </citation>
    <scope>NUCLEOTIDE SEQUENCE [GENOMIC DNA]</scope>
    <source>
        <strain>ATCC 20336 / pK233 / NCYC 997</strain>
    </source>
</reference>
<reference key="2">
    <citation type="journal article" date="1987" name="Gene">
        <title>The nucleotide sequence of complementary DNA and the deduced amino acid sequence of peroxisomal catalase of the yeast Candida tropicalis pK233.</title>
        <authorList>
            <person name="Murray W.W."/>
            <person name="Rachubinski R.A."/>
        </authorList>
    </citation>
    <scope>NUCLEOTIDE SEQUENCE [MRNA]</scope>
    <source>
        <strain>ATCC 20336 / pK233 / NCYC 997</strain>
    </source>
</reference>
<reference key="3">
    <citation type="journal article" date="1989" name="Nucleic Acids Res.">
        <title>Nucleotide sequence of peroxisomal catalase from the yeast Candida tropicalis pK233: identification of an upstream BamHI site polymorphism.</title>
        <authorList>
            <person name="Murray W.W."/>
            <person name="Rachubinski R.A."/>
        </authorList>
    </citation>
    <scope>NUCLEOTIDE SEQUENCE [GENOMIC DNA]</scope>
    <source>
        <strain>ATCC 20336 / pK233 / NCYC 997</strain>
    </source>
</reference>
<reference key="4">
    <citation type="journal article" date="1987" name="Biochim. Biophys. Acta">
        <title>Isolation of cDNA clones coding for peroxisomal proteins of Candida tropicalis: identification and sequence of a clone for catalase.</title>
        <authorList>
            <person name="Rachubinski R.A."/>
            <person name="Fujiki Y."/>
            <person name="Lazarow P.B."/>
        </authorList>
    </citation>
    <scope>NUCLEOTIDE SEQUENCE [MRNA] OF 377-385</scope>
    <source>
        <strain>ATCC 20336 / pK233 / NCYC 997</strain>
    </source>
</reference>
<reference key="5">
    <citation type="journal article" date="1987" name="FEBS Lett.">
        <title>Isolation of several cDNAs encoding yeast peroxisomal enzymes.</title>
        <authorList>
            <person name="Ueda M."/>
            <person name="Okada H."/>
            <person name="Hishida T."/>
            <person name="Teranishi Y."/>
            <person name="Tanaka A."/>
        </authorList>
    </citation>
    <scope>NUCLEOTIDE SEQUENCE [GENOMIC DNA] OF 394-451</scope>
    <scope>PROTEIN SEQUENCE OF 2-24; 109-113; 222-236; 302-307; 394-403 AND 422-428</scope>
    <source>
        <strain>ATCC 20336 / pK233 / NCYC 997</strain>
    </source>
</reference>
<dbReference type="EC" id="1.11.1.6" evidence="3"/>
<dbReference type="EMBL" id="M18832">
    <property type="protein sequence ID" value="AAA34327.1"/>
    <property type="molecule type" value="mRNA"/>
</dbReference>
<dbReference type="EMBL" id="X05886">
    <property type="protein sequence ID" value="CAA29310.1"/>
    <property type="molecule type" value="mRNA"/>
</dbReference>
<dbReference type="EMBL" id="X05604">
    <property type="protein sequence ID" value="CAA29093.1"/>
    <property type="molecule type" value="mRNA"/>
</dbReference>
<dbReference type="EMBL" id="X06660">
    <property type="protein sequence ID" value="CAA29859.1"/>
    <property type="molecule type" value="Genomic_DNA"/>
</dbReference>
<dbReference type="EMBL" id="X13978">
    <property type="protein sequence ID" value="CAA32159.1"/>
    <property type="molecule type" value="Genomic_DNA"/>
</dbReference>
<dbReference type="PIR" id="A29629">
    <property type="entry name" value="CSCKPT"/>
</dbReference>
<dbReference type="SMR" id="P07820"/>
<dbReference type="PeroxiBase" id="5256">
    <property type="entry name" value="CtKat01"/>
</dbReference>
<dbReference type="VEuPathDB" id="FungiDB:CTMYA2_025960"/>
<dbReference type="VEuPathDB" id="FungiDB:CTRG_04203"/>
<dbReference type="GO" id="GO:0005759">
    <property type="term" value="C:mitochondrial matrix"/>
    <property type="evidence" value="ECO:0007669"/>
    <property type="project" value="EnsemblFungi"/>
</dbReference>
<dbReference type="GO" id="GO:0005782">
    <property type="term" value="C:peroxisomal matrix"/>
    <property type="evidence" value="ECO:0007669"/>
    <property type="project" value="UniProtKB-SubCell"/>
</dbReference>
<dbReference type="GO" id="GO:0004096">
    <property type="term" value="F:catalase activity"/>
    <property type="evidence" value="ECO:0007669"/>
    <property type="project" value="UniProtKB-EC"/>
</dbReference>
<dbReference type="GO" id="GO:0020037">
    <property type="term" value="F:heme binding"/>
    <property type="evidence" value="ECO:0007669"/>
    <property type="project" value="InterPro"/>
</dbReference>
<dbReference type="GO" id="GO:0046872">
    <property type="term" value="F:metal ion binding"/>
    <property type="evidence" value="ECO:0007669"/>
    <property type="project" value="UniProtKB-KW"/>
</dbReference>
<dbReference type="GO" id="GO:0042744">
    <property type="term" value="P:hydrogen peroxide catabolic process"/>
    <property type="evidence" value="ECO:0007669"/>
    <property type="project" value="UniProtKB-KW"/>
</dbReference>
<dbReference type="GO" id="GO:0042542">
    <property type="term" value="P:response to hydrogen peroxide"/>
    <property type="evidence" value="ECO:0007669"/>
    <property type="project" value="TreeGrafter"/>
</dbReference>
<dbReference type="CDD" id="cd08157">
    <property type="entry name" value="catalase_fungal"/>
    <property type="match status" value="1"/>
</dbReference>
<dbReference type="FunFam" id="2.40.180.10:FF:000001">
    <property type="entry name" value="Catalase"/>
    <property type="match status" value="1"/>
</dbReference>
<dbReference type="Gene3D" id="2.40.180.10">
    <property type="entry name" value="Catalase core domain"/>
    <property type="match status" value="1"/>
</dbReference>
<dbReference type="InterPro" id="IPR018028">
    <property type="entry name" value="Catalase"/>
</dbReference>
<dbReference type="InterPro" id="IPR024708">
    <property type="entry name" value="Catalase_AS"/>
</dbReference>
<dbReference type="InterPro" id="IPR024711">
    <property type="entry name" value="Catalase_clade1/3"/>
</dbReference>
<dbReference type="InterPro" id="IPR011614">
    <property type="entry name" value="Catalase_core"/>
</dbReference>
<dbReference type="InterPro" id="IPR002226">
    <property type="entry name" value="Catalase_haem_BS"/>
</dbReference>
<dbReference type="InterPro" id="IPR010582">
    <property type="entry name" value="Catalase_immune_responsive"/>
</dbReference>
<dbReference type="InterPro" id="IPR020835">
    <property type="entry name" value="Catalase_sf"/>
</dbReference>
<dbReference type="PANTHER" id="PTHR11465">
    <property type="entry name" value="CATALASE"/>
    <property type="match status" value="1"/>
</dbReference>
<dbReference type="PANTHER" id="PTHR11465:SF9">
    <property type="entry name" value="CATALASE"/>
    <property type="match status" value="1"/>
</dbReference>
<dbReference type="Pfam" id="PF00199">
    <property type="entry name" value="Catalase"/>
    <property type="match status" value="1"/>
</dbReference>
<dbReference type="Pfam" id="PF06628">
    <property type="entry name" value="Catalase-rel"/>
    <property type="match status" value="1"/>
</dbReference>
<dbReference type="PIRSF" id="PIRSF038928">
    <property type="entry name" value="Catalase_clade1-3"/>
    <property type="match status" value="1"/>
</dbReference>
<dbReference type="PRINTS" id="PR00067">
    <property type="entry name" value="CATALASE"/>
</dbReference>
<dbReference type="SMART" id="SM01060">
    <property type="entry name" value="Catalase"/>
    <property type="match status" value="1"/>
</dbReference>
<dbReference type="SUPFAM" id="SSF56634">
    <property type="entry name" value="Heme-dependent catalase-like"/>
    <property type="match status" value="1"/>
</dbReference>
<dbReference type="PROSITE" id="PS00437">
    <property type="entry name" value="CATALASE_1"/>
    <property type="match status" value="1"/>
</dbReference>
<dbReference type="PROSITE" id="PS00438">
    <property type="entry name" value="CATALASE_2"/>
    <property type="match status" value="1"/>
</dbReference>
<dbReference type="PROSITE" id="PS51402">
    <property type="entry name" value="CATALASE_3"/>
    <property type="match status" value="1"/>
</dbReference>
<keyword id="KW-0903">Direct protein sequencing</keyword>
<keyword id="KW-0349">Heme</keyword>
<keyword id="KW-0376">Hydrogen peroxide</keyword>
<keyword id="KW-0408">Iron</keyword>
<keyword id="KW-0479">Metal-binding</keyword>
<keyword id="KW-0560">Oxidoreductase</keyword>
<keyword id="KW-0575">Peroxidase</keyword>
<keyword id="KW-0576">Peroxisome</keyword>
<protein>
    <recommendedName>
        <fullName>Peroxisomal catalase</fullName>
        <ecNumber evidence="3">1.11.1.6</ecNumber>
    </recommendedName>
    <alternativeName>
        <fullName>PXP-9</fullName>
    </alternativeName>
</protein>